<feature type="chain" id="PRO_0000326717" description="Acylphosphatase">
    <location>
        <begin position="1"/>
        <end position="91"/>
    </location>
</feature>
<feature type="domain" description="Acylphosphatase-like" evidence="1">
    <location>
        <begin position="4"/>
        <end position="91"/>
    </location>
</feature>
<feature type="active site" evidence="1">
    <location>
        <position position="19"/>
    </location>
</feature>
<feature type="active site" evidence="1">
    <location>
        <position position="37"/>
    </location>
</feature>
<organism>
    <name type="scientific">Geotalea uraniireducens (strain Rf4)</name>
    <name type="common">Geobacter uraniireducens</name>
    <dbReference type="NCBI Taxonomy" id="351605"/>
    <lineage>
        <taxon>Bacteria</taxon>
        <taxon>Pseudomonadati</taxon>
        <taxon>Thermodesulfobacteriota</taxon>
        <taxon>Desulfuromonadia</taxon>
        <taxon>Geobacterales</taxon>
        <taxon>Geobacteraceae</taxon>
        <taxon>Geotalea</taxon>
    </lineage>
</organism>
<protein>
    <recommendedName>
        <fullName>Acylphosphatase</fullName>
        <ecNumber>3.6.1.7</ecNumber>
    </recommendedName>
    <alternativeName>
        <fullName>Acylphosphate phosphohydrolase</fullName>
    </alternativeName>
</protein>
<proteinExistence type="inferred from homology"/>
<keyword id="KW-0378">Hydrolase</keyword>
<keyword id="KW-1185">Reference proteome</keyword>
<gene>
    <name type="primary">acyP</name>
    <name type="ordered locus">Gura_1304</name>
</gene>
<accession>A5GA97</accession>
<name>ACYP_GEOUR</name>
<dbReference type="EC" id="3.6.1.7"/>
<dbReference type="EMBL" id="CP000698">
    <property type="protein sequence ID" value="ABQ25505.1"/>
    <property type="molecule type" value="Genomic_DNA"/>
</dbReference>
<dbReference type="RefSeq" id="WP_011938223.1">
    <property type="nucleotide sequence ID" value="NC_009483.1"/>
</dbReference>
<dbReference type="SMR" id="A5GA97"/>
<dbReference type="STRING" id="351605.Gura_1304"/>
<dbReference type="KEGG" id="gur:Gura_1304"/>
<dbReference type="HOGENOM" id="CLU_141932_1_0_7"/>
<dbReference type="OrthoDB" id="5295388at2"/>
<dbReference type="Proteomes" id="UP000006695">
    <property type="component" value="Chromosome"/>
</dbReference>
<dbReference type="GO" id="GO:0003998">
    <property type="term" value="F:acylphosphatase activity"/>
    <property type="evidence" value="ECO:0007669"/>
    <property type="project" value="UniProtKB-EC"/>
</dbReference>
<dbReference type="Gene3D" id="3.30.70.100">
    <property type="match status" value="1"/>
</dbReference>
<dbReference type="InterPro" id="IPR020456">
    <property type="entry name" value="Acylphosphatase"/>
</dbReference>
<dbReference type="InterPro" id="IPR001792">
    <property type="entry name" value="Acylphosphatase-like_dom"/>
</dbReference>
<dbReference type="InterPro" id="IPR036046">
    <property type="entry name" value="Acylphosphatase-like_dom_sf"/>
</dbReference>
<dbReference type="InterPro" id="IPR017968">
    <property type="entry name" value="Acylphosphatase_CS"/>
</dbReference>
<dbReference type="NCBIfam" id="NF011011">
    <property type="entry name" value="PRK14438.1"/>
    <property type="match status" value="1"/>
</dbReference>
<dbReference type="PANTHER" id="PTHR47268">
    <property type="entry name" value="ACYLPHOSPHATASE"/>
    <property type="match status" value="1"/>
</dbReference>
<dbReference type="PANTHER" id="PTHR47268:SF4">
    <property type="entry name" value="ACYLPHOSPHATASE"/>
    <property type="match status" value="1"/>
</dbReference>
<dbReference type="Pfam" id="PF00708">
    <property type="entry name" value="Acylphosphatase"/>
    <property type="match status" value="1"/>
</dbReference>
<dbReference type="SUPFAM" id="SSF54975">
    <property type="entry name" value="Acylphosphatase/BLUF domain-like"/>
    <property type="match status" value="1"/>
</dbReference>
<dbReference type="PROSITE" id="PS00150">
    <property type="entry name" value="ACYLPHOSPHATASE_1"/>
    <property type="match status" value="1"/>
</dbReference>
<dbReference type="PROSITE" id="PS00151">
    <property type="entry name" value="ACYLPHOSPHATASE_2"/>
    <property type="match status" value="1"/>
</dbReference>
<dbReference type="PROSITE" id="PS51160">
    <property type="entry name" value="ACYLPHOSPHATASE_3"/>
    <property type="match status" value="1"/>
</dbReference>
<comment type="catalytic activity">
    <reaction>
        <text>an acyl phosphate + H2O = a carboxylate + phosphate + H(+)</text>
        <dbReference type="Rhea" id="RHEA:14965"/>
        <dbReference type="ChEBI" id="CHEBI:15377"/>
        <dbReference type="ChEBI" id="CHEBI:15378"/>
        <dbReference type="ChEBI" id="CHEBI:29067"/>
        <dbReference type="ChEBI" id="CHEBI:43474"/>
        <dbReference type="ChEBI" id="CHEBI:59918"/>
        <dbReference type="EC" id="3.6.1.7"/>
    </reaction>
</comment>
<comment type="similarity">
    <text evidence="2">Belongs to the acylphosphatase family.</text>
</comment>
<evidence type="ECO:0000255" key="1">
    <source>
        <dbReference type="PROSITE-ProRule" id="PRU00520"/>
    </source>
</evidence>
<evidence type="ECO:0000305" key="2"/>
<reference key="1">
    <citation type="submission" date="2007-05" db="EMBL/GenBank/DDBJ databases">
        <title>Complete sequence of Geobacter uraniireducens Rf4.</title>
        <authorList>
            <consortium name="US DOE Joint Genome Institute"/>
            <person name="Copeland A."/>
            <person name="Lucas S."/>
            <person name="Lapidus A."/>
            <person name="Barry K."/>
            <person name="Detter J.C."/>
            <person name="Glavina del Rio T."/>
            <person name="Hammon N."/>
            <person name="Israni S."/>
            <person name="Dalin E."/>
            <person name="Tice H."/>
            <person name="Pitluck S."/>
            <person name="Chertkov O."/>
            <person name="Brettin T."/>
            <person name="Bruce D."/>
            <person name="Han C."/>
            <person name="Schmutz J."/>
            <person name="Larimer F."/>
            <person name="Land M."/>
            <person name="Hauser L."/>
            <person name="Kyrpides N."/>
            <person name="Mikhailova N."/>
            <person name="Shelobolina E."/>
            <person name="Aklujkar M."/>
            <person name="Lovley D."/>
            <person name="Richardson P."/>
        </authorList>
    </citation>
    <scope>NUCLEOTIDE SEQUENCE [LARGE SCALE GENOMIC DNA]</scope>
    <source>
        <strain>ATCC BAA-1134 / JCM 13001 / Rf4</strain>
    </source>
</reference>
<sequence length="91" mass="10121">MKIRAMVTVKGMVQGVNFRRYTQQTAMRFNVSGWVKNLPNGSVAGCFEGEENDVAALIDWCRQGPGSARVSGVEVERGEFTGEFDDFHIAY</sequence>